<accession>P17872</accession>
<organism>
    <name type="scientific">Aspergillus niger</name>
    <dbReference type="NCBI Taxonomy" id="5061"/>
    <lineage>
        <taxon>Eukaryota</taxon>
        <taxon>Fungi</taxon>
        <taxon>Dikarya</taxon>
        <taxon>Ascomycota</taxon>
        <taxon>Pezizomycotina</taxon>
        <taxon>Eurotiomycetes</taxon>
        <taxon>Eurotiomycetidae</taxon>
        <taxon>Eurotiales</taxon>
        <taxon>Aspergillaceae</taxon>
        <taxon>Aspergillus</taxon>
        <taxon>Aspergillus subgen. Circumdati</taxon>
    </lineage>
</organism>
<gene>
    <name type="primary">pme1</name>
</gene>
<protein>
    <recommendedName>
        <fullName>Pectinesterase</fullName>
        <shortName>PE</shortName>
        <ecNumber>3.1.1.11</ecNumber>
    </recommendedName>
    <alternativeName>
        <fullName>Pectin methylesterase</fullName>
    </alternativeName>
</protein>
<reference key="1">
    <citation type="journal article" date="1990" name="Nucleic Acids Res.">
        <title>Nucleotide and derived amino acid sequence of a pectinesterase cDNA isolated from Aspergillus niger strain RH 5344.</title>
        <authorList>
            <person name="Khanh N.Q."/>
            <person name="Albrecht H."/>
            <person name="Ruttkowski E."/>
            <person name="Loeffler F."/>
            <person name="Gottschalk M."/>
            <person name="Jany K.-D."/>
        </authorList>
    </citation>
    <scope>NUCLEOTIDE SEQUENCE [MRNA]</scope>
    <scope>PARTIAL PROTEIN SEQUENCE</scope>
    <source>
        <strain>RH 5344</strain>
    </source>
</reference>
<reference key="2">
    <citation type="journal article" date="1991" name="Gene">
        <title>Characterization and expression of a genomic pectin methyl esterase-encoding gene in Aspergillus niger.</title>
        <authorList>
            <person name="Khanh N.Q."/>
            <person name="Ruttkowski E."/>
            <person name="Leidinger K."/>
            <person name="Albrecht H."/>
            <person name="Gottschalk M."/>
        </authorList>
    </citation>
    <scope>NUCLEOTIDE SEQUENCE [GENOMIC DNA]</scope>
    <source>
        <strain>RH 5344</strain>
    </source>
</reference>
<feature type="signal peptide">
    <location>
        <begin position="1"/>
        <end position="17"/>
    </location>
</feature>
<feature type="chain" id="PRO_0000023473" description="Pectinesterase">
    <location>
        <begin position="18"/>
        <end position="331"/>
    </location>
</feature>
<feature type="active site" description="Proton donor" evidence="2">
    <location>
        <position position="161"/>
    </location>
</feature>
<feature type="active site" description="Nucleophile" evidence="2">
    <location>
        <position position="182"/>
    </location>
</feature>
<feature type="binding site" evidence="1">
    <location>
        <position position="138"/>
    </location>
    <ligand>
        <name>substrate</name>
    </ligand>
</feature>
<feature type="binding site" evidence="1">
    <location>
        <position position="247"/>
    </location>
    <ligand>
        <name>substrate</name>
    </ligand>
</feature>
<feature type="binding site" evidence="1">
    <location>
        <position position="249"/>
    </location>
    <ligand>
        <name>substrate</name>
    </ligand>
</feature>
<feature type="site" description="Transition state stabilizer" evidence="1">
    <location>
        <position position="160"/>
    </location>
</feature>
<sequence>MVKSILASVLFAATALAASRMTAPSGAIVVAKSGGDYDTISAAVDALSTTSTETQTIFIEEGSYDEQVYIPALSGKLIVYGQTEDTTTYTSNLVNITHAIALADVDNDDETATLRNYAEGSAIYNLNIANTCGQACHQALAVSAYASEQGYYACQFTGYQDTLLAETGYQVYAGTYIEGAVDFIFGQHARAWFHECDIRVLEGPSSASITANGRSSESDDSYYVIHKSTVAAADGNDVSSGTYYLGRPWSQYARVCFQKTSMTDVINHLGWTEWSTSTPNTENVTFVEYGNTGTGAEGPRANFSSELTEPITISWLLGSDWEDWVDTSYIN</sequence>
<dbReference type="EC" id="3.1.1.11"/>
<dbReference type="EMBL" id="X52902">
    <property type="protein sequence ID" value="CAA37084.1"/>
    <property type="molecule type" value="mRNA"/>
</dbReference>
<dbReference type="EMBL" id="X54145">
    <property type="protein sequence ID" value="CAA38084.1"/>
    <property type="molecule type" value="Genomic_DNA"/>
</dbReference>
<dbReference type="PIR" id="JT0589">
    <property type="entry name" value="JT0589"/>
</dbReference>
<dbReference type="SMR" id="P17872"/>
<dbReference type="PaxDb" id="5061-CADANGAP00003550"/>
<dbReference type="VEuPathDB" id="FungiDB:An03g06310"/>
<dbReference type="VEuPathDB" id="FungiDB:ASPNIDRAFT2_1137796"/>
<dbReference type="VEuPathDB" id="FungiDB:ATCC64974_75710"/>
<dbReference type="VEuPathDB" id="FungiDB:M747DRAFT_364154"/>
<dbReference type="eggNOG" id="ENOG502QSQ4">
    <property type="taxonomic scope" value="Eukaryota"/>
</dbReference>
<dbReference type="BioCyc" id="MetaCyc:MONOMER-20553"/>
<dbReference type="UniPathway" id="UPA00545">
    <property type="reaction ID" value="UER00823"/>
</dbReference>
<dbReference type="GO" id="GO:0005576">
    <property type="term" value="C:extracellular region"/>
    <property type="evidence" value="ECO:0007669"/>
    <property type="project" value="UniProtKB-SubCell"/>
</dbReference>
<dbReference type="GO" id="GO:0030599">
    <property type="term" value="F:pectinesterase activity"/>
    <property type="evidence" value="ECO:0007669"/>
    <property type="project" value="UniProtKB-EC"/>
</dbReference>
<dbReference type="GO" id="GO:0042545">
    <property type="term" value="P:cell wall modification"/>
    <property type="evidence" value="ECO:0007669"/>
    <property type="project" value="InterPro"/>
</dbReference>
<dbReference type="GO" id="GO:0045490">
    <property type="term" value="P:pectin catabolic process"/>
    <property type="evidence" value="ECO:0007669"/>
    <property type="project" value="UniProtKB-UniPathway"/>
</dbReference>
<dbReference type="FunFam" id="2.160.20.10:FF:000014">
    <property type="entry name" value="Pectinesterase"/>
    <property type="match status" value="1"/>
</dbReference>
<dbReference type="Gene3D" id="2.160.20.10">
    <property type="entry name" value="Single-stranded right-handed beta-helix, Pectin lyase-like"/>
    <property type="match status" value="1"/>
</dbReference>
<dbReference type="InterPro" id="IPR012334">
    <property type="entry name" value="Pectin_lyas_fold"/>
</dbReference>
<dbReference type="InterPro" id="IPR011050">
    <property type="entry name" value="Pectin_lyase_fold/virulence"/>
</dbReference>
<dbReference type="InterPro" id="IPR033131">
    <property type="entry name" value="Pectinesterase_Asp_AS"/>
</dbReference>
<dbReference type="InterPro" id="IPR000070">
    <property type="entry name" value="Pectinesterase_cat"/>
</dbReference>
<dbReference type="InterPro" id="IPR018040">
    <property type="entry name" value="Pectinesterase_Tyr_AS"/>
</dbReference>
<dbReference type="PANTHER" id="PTHR31321">
    <property type="entry name" value="ACYL-COA THIOESTER HYDROLASE YBHC-RELATED"/>
    <property type="match status" value="1"/>
</dbReference>
<dbReference type="PANTHER" id="PTHR31321:SF127">
    <property type="entry name" value="PECTINESTERASE"/>
    <property type="match status" value="1"/>
</dbReference>
<dbReference type="Pfam" id="PF01095">
    <property type="entry name" value="Pectinesterase"/>
    <property type="match status" value="1"/>
</dbReference>
<dbReference type="SUPFAM" id="SSF51126">
    <property type="entry name" value="Pectin lyase-like"/>
    <property type="match status" value="1"/>
</dbReference>
<dbReference type="PROSITE" id="PS00800">
    <property type="entry name" value="PECTINESTERASE_1"/>
    <property type="match status" value="1"/>
</dbReference>
<dbReference type="PROSITE" id="PS00503">
    <property type="entry name" value="PECTINESTERASE_2"/>
    <property type="match status" value="1"/>
</dbReference>
<name>PME_ASPNG</name>
<proteinExistence type="evidence at protein level"/>
<evidence type="ECO:0000250" key="1"/>
<evidence type="ECO:0000255" key="2">
    <source>
        <dbReference type="PROSITE-ProRule" id="PRU10040"/>
    </source>
</evidence>
<evidence type="ECO:0000305" key="3"/>
<keyword id="KW-0063">Aspartyl esterase</keyword>
<keyword id="KW-0961">Cell wall biogenesis/degradation</keyword>
<keyword id="KW-0903">Direct protein sequencing</keyword>
<keyword id="KW-0378">Hydrolase</keyword>
<keyword id="KW-0964">Secreted</keyword>
<keyword id="KW-0732">Signal</keyword>
<comment type="function">
    <text>Involved in maceration and soft-rotting of plant tissue.</text>
</comment>
<comment type="catalytic activity">
    <reaction>
        <text>[(1-&gt;4)-alpha-D-galacturonosyl methyl ester](n) + n H2O = [(1-&gt;4)-alpha-D-galacturonosyl](n) + n methanol + n H(+)</text>
        <dbReference type="Rhea" id="RHEA:22380"/>
        <dbReference type="Rhea" id="RHEA-COMP:14570"/>
        <dbReference type="Rhea" id="RHEA-COMP:14573"/>
        <dbReference type="ChEBI" id="CHEBI:15377"/>
        <dbReference type="ChEBI" id="CHEBI:15378"/>
        <dbReference type="ChEBI" id="CHEBI:17790"/>
        <dbReference type="ChEBI" id="CHEBI:140522"/>
        <dbReference type="ChEBI" id="CHEBI:140523"/>
        <dbReference type="EC" id="3.1.1.11"/>
    </reaction>
</comment>
<comment type="pathway">
    <text>Glycan metabolism; pectin degradation; 2-dehydro-3-deoxy-D-gluconate from pectin: step 1/5.</text>
</comment>
<comment type="subcellular location">
    <subcellularLocation>
        <location>Secreted</location>
    </subcellularLocation>
</comment>
<comment type="similarity">
    <text evidence="3">Belongs to the pectinesterase family.</text>
</comment>